<protein>
    <recommendedName>
        <fullName evidence="1">Argininosuccinate synthase</fullName>
        <ecNumber evidence="1">6.3.4.5</ecNumber>
    </recommendedName>
    <alternativeName>
        <fullName evidence="1">Citrulline--aspartate ligase</fullName>
    </alternativeName>
</protein>
<reference key="1">
    <citation type="submission" date="2007-07" db="EMBL/GenBank/DDBJ databases">
        <title>Complete sequence of chromosome of Xanthobacter autotrophicus Py2.</title>
        <authorList>
            <consortium name="US DOE Joint Genome Institute"/>
            <person name="Copeland A."/>
            <person name="Lucas S."/>
            <person name="Lapidus A."/>
            <person name="Barry K."/>
            <person name="Glavina del Rio T."/>
            <person name="Hammon N."/>
            <person name="Israni S."/>
            <person name="Dalin E."/>
            <person name="Tice H."/>
            <person name="Pitluck S."/>
            <person name="Sims D."/>
            <person name="Brettin T."/>
            <person name="Bruce D."/>
            <person name="Detter J.C."/>
            <person name="Han C."/>
            <person name="Tapia R."/>
            <person name="Brainard J."/>
            <person name="Schmutz J."/>
            <person name="Larimer F."/>
            <person name="Land M."/>
            <person name="Hauser L."/>
            <person name="Kyrpides N."/>
            <person name="Kim E."/>
            <person name="Ensigns S.A."/>
            <person name="Richardson P."/>
        </authorList>
    </citation>
    <scope>NUCLEOTIDE SEQUENCE [LARGE SCALE GENOMIC DNA]</scope>
    <source>
        <strain>ATCC BAA-1158 / Py2</strain>
    </source>
</reference>
<proteinExistence type="inferred from homology"/>
<organism>
    <name type="scientific">Xanthobacter autotrophicus (strain ATCC BAA-1158 / Py2)</name>
    <dbReference type="NCBI Taxonomy" id="78245"/>
    <lineage>
        <taxon>Bacteria</taxon>
        <taxon>Pseudomonadati</taxon>
        <taxon>Pseudomonadota</taxon>
        <taxon>Alphaproteobacteria</taxon>
        <taxon>Hyphomicrobiales</taxon>
        <taxon>Xanthobacteraceae</taxon>
        <taxon>Xanthobacter</taxon>
    </lineage>
</organism>
<feature type="chain" id="PRO_1000089061" description="Argininosuccinate synthase">
    <location>
        <begin position="1"/>
        <end position="409"/>
    </location>
</feature>
<feature type="binding site" evidence="1">
    <location>
        <begin position="11"/>
        <end position="19"/>
    </location>
    <ligand>
        <name>ATP</name>
        <dbReference type="ChEBI" id="CHEBI:30616"/>
    </ligand>
</feature>
<feature type="binding site" evidence="1">
    <location>
        <position position="38"/>
    </location>
    <ligand>
        <name>ATP</name>
        <dbReference type="ChEBI" id="CHEBI:30616"/>
    </ligand>
</feature>
<feature type="binding site" evidence="1">
    <location>
        <position position="91"/>
    </location>
    <ligand>
        <name>L-citrulline</name>
        <dbReference type="ChEBI" id="CHEBI:57743"/>
    </ligand>
</feature>
<feature type="binding site" evidence="1">
    <location>
        <position position="96"/>
    </location>
    <ligand>
        <name>L-citrulline</name>
        <dbReference type="ChEBI" id="CHEBI:57743"/>
    </ligand>
</feature>
<feature type="binding site" evidence="1">
    <location>
        <position position="121"/>
    </location>
    <ligand>
        <name>ATP</name>
        <dbReference type="ChEBI" id="CHEBI:30616"/>
    </ligand>
</feature>
<feature type="binding site" evidence="1">
    <location>
        <position position="123"/>
    </location>
    <ligand>
        <name>L-aspartate</name>
        <dbReference type="ChEBI" id="CHEBI:29991"/>
    </ligand>
</feature>
<feature type="binding site" evidence="1">
    <location>
        <position position="127"/>
    </location>
    <ligand>
        <name>L-aspartate</name>
        <dbReference type="ChEBI" id="CHEBI:29991"/>
    </ligand>
</feature>
<feature type="binding site" evidence="1">
    <location>
        <position position="127"/>
    </location>
    <ligand>
        <name>L-citrulline</name>
        <dbReference type="ChEBI" id="CHEBI:57743"/>
    </ligand>
</feature>
<feature type="binding site" evidence="1">
    <location>
        <position position="128"/>
    </location>
    <ligand>
        <name>L-aspartate</name>
        <dbReference type="ChEBI" id="CHEBI:29991"/>
    </ligand>
</feature>
<feature type="binding site" evidence="1">
    <location>
        <position position="131"/>
    </location>
    <ligand>
        <name>L-citrulline</name>
        <dbReference type="ChEBI" id="CHEBI:57743"/>
    </ligand>
</feature>
<feature type="binding site" evidence="1">
    <location>
        <position position="182"/>
    </location>
    <ligand>
        <name>L-citrulline</name>
        <dbReference type="ChEBI" id="CHEBI:57743"/>
    </ligand>
</feature>
<feature type="binding site" evidence="1">
    <location>
        <position position="191"/>
    </location>
    <ligand>
        <name>L-citrulline</name>
        <dbReference type="ChEBI" id="CHEBI:57743"/>
    </ligand>
</feature>
<feature type="binding site" evidence="1">
    <location>
        <position position="267"/>
    </location>
    <ligand>
        <name>L-citrulline</name>
        <dbReference type="ChEBI" id="CHEBI:57743"/>
    </ligand>
</feature>
<feature type="binding site" evidence="1">
    <location>
        <position position="279"/>
    </location>
    <ligand>
        <name>L-citrulline</name>
        <dbReference type="ChEBI" id="CHEBI:57743"/>
    </ligand>
</feature>
<evidence type="ECO:0000255" key="1">
    <source>
        <dbReference type="HAMAP-Rule" id="MF_00005"/>
    </source>
</evidence>
<name>ASSY_XANP2</name>
<comment type="catalytic activity">
    <reaction evidence="1">
        <text>L-citrulline + L-aspartate + ATP = 2-(N(omega)-L-arginino)succinate + AMP + diphosphate + H(+)</text>
        <dbReference type="Rhea" id="RHEA:10932"/>
        <dbReference type="ChEBI" id="CHEBI:15378"/>
        <dbReference type="ChEBI" id="CHEBI:29991"/>
        <dbReference type="ChEBI" id="CHEBI:30616"/>
        <dbReference type="ChEBI" id="CHEBI:33019"/>
        <dbReference type="ChEBI" id="CHEBI:57472"/>
        <dbReference type="ChEBI" id="CHEBI:57743"/>
        <dbReference type="ChEBI" id="CHEBI:456215"/>
        <dbReference type="EC" id="6.3.4.5"/>
    </reaction>
</comment>
<comment type="pathway">
    <text evidence="1">Amino-acid biosynthesis; L-arginine biosynthesis; L-arginine from L-ornithine and carbamoyl phosphate: step 2/3.</text>
</comment>
<comment type="subunit">
    <text evidence="1">Homotetramer.</text>
</comment>
<comment type="subcellular location">
    <subcellularLocation>
        <location evidence="1">Cytoplasm</location>
    </subcellularLocation>
</comment>
<comment type="similarity">
    <text evidence="1">Belongs to the argininosuccinate synthase family. Type 1 subfamily.</text>
</comment>
<accession>A7IGW4</accession>
<gene>
    <name evidence="1" type="primary">argG</name>
    <name type="ordered locus">Xaut_2013</name>
</gene>
<keyword id="KW-0028">Amino-acid biosynthesis</keyword>
<keyword id="KW-0055">Arginine biosynthesis</keyword>
<keyword id="KW-0067">ATP-binding</keyword>
<keyword id="KW-0963">Cytoplasm</keyword>
<keyword id="KW-0436">Ligase</keyword>
<keyword id="KW-0547">Nucleotide-binding</keyword>
<keyword id="KW-1185">Reference proteome</keyword>
<dbReference type="EC" id="6.3.4.5" evidence="1"/>
<dbReference type="EMBL" id="CP000781">
    <property type="protein sequence ID" value="ABS67257.1"/>
    <property type="molecule type" value="Genomic_DNA"/>
</dbReference>
<dbReference type="SMR" id="A7IGW4"/>
<dbReference type="STRING" id="78245.Xaut_2013"/>
<dbReference type="KEGG" id="xau:Xaut_2013"/>
<dbReference type="eggNOG" id="COG0137">
    <property type="taxonomic scope" value="Bacteria"/>
</dbReference>
<dbReference type="HOGENOM" id="CLU_032784_4_2_5"/>
<dbReference type="OrthoDB" id="9801641at2"/>
<dbReference type="PhylomeDB" id="A7IGW4"/>
<dbReference type="UniPathway" id="UPA00068">
    <property type="reaction ID" value="UER00113"/>
</dbReference>
<dbReference type="Proteomes" id="UP000002417">
    <property type="component" value="Chromosome"/>
</dbReference>
<dbReference type="GO" id="GO:0005737">
    <property type="term" value="C:cytoplasm"/>
    <property type="evidence" value="ECO:0007669"/>
    <property type="project" value="UniProtKB-SubCell"/>
</dbReference>
<dbReference type="GO" id="GO:0004055">
    <property type="term" value="F:argininosuccinate synthase activity"/>
    <property type="evidence" value="ECO:0007669"/>
    <property type="project" value="UniProtKB-UniRule"/>
</dbReference>
<dbReference type="GO" id="GO:0005524">
    <property type="term" value="F:ATP binding"/>
    <property type="evidence" value="ECO:0007669"/>
    <property type="project" value="UniProtKB-UniRule"/>
</dbReference>
<dbReference type="GO" id="GO:0000053">
    <property type="term" value="P:argininosuccinate metabolic process"/>
    <property type="evidence" value="ECO:0007669"/>
    <property type="project" value="TreeGrafter"/>
</dbReference>
<dbReference type="GO" id="GO:0006526">
    <property type="term" value="P:L-arginine biosynthetic process"/>
    <property type="evidence" value="ECO:0007669"/>
    <property type="project" value="UniProtKB-UniRule"/>
</dbReference>
<dbReference type="GO" id="GO:0000050">
    <property type="term" value="P:urea cycle"/>
    <property type="evidence" value="ECO:0007669"/>
    <property type="project" value="TreeGrafter"/>
</dbReference>
<dbReference type="CDD" id="cd01999">
    <property type="entry name" value="ASS"/>
    <property type="match status" value="1"/>
</dbReference>
<dbReference type="FunFam" id="3.40.50.620:FF:000019">
    <property type="entry name" value="Argininosuccinate synthase"/>
    <property type="match status" value="1"/>
</dbReference>
<dbReference type="FunFam" id="3.90.1260.10:FF:000007">
    <property type="entry name" value="Argininosuccinate synthase"/>
    <property type="match status" value="1"/>
</dbReference>
<dbReference type="Gene3D" id="3.90.1260.10">
    <property type="entry name" value="Argininosuccinate synthetase, chain A, domain 2"/>
    <property type="match status" value="1"/>
</dbReference>
<dbReference type="Gene3D" id="3.40.50.620">
    <property type="entry name" value="HUPs"/>
    <property type="match status" value="1"/>
</dbReference>
<dbReference type="Gene3D" id="1.20.5.470">
    <property type="entry name" value="Single helix bin"/>
    <property type="match status" value="1"/>
</dbReference>
<dbReference type="HAMAP" id="MF_00005">
    <property type="entry name" value="Arg_succ_synth_type1"/>
    <property type="match status" value="1"/>
</dbReference>
<dbReference type="InterPro" id="IPR048268">
    <property type="entry name" value="Arginosuc_syn_C"/>
</dbReference>
<dbReference type="InterPro" id="IPR048267">
    <property type="entry name" value="Arginosuc_syn_N"/>
</dbReference>
<dbReference type="InterPro" id="IPR001518">
    <property type="entry name" value="Arginosuc_synth"/>
</dbReference>
<dbReference type="InterPro" id="IPR018223">
    <property type="entry name" value="Arginosuc_synth_CS"/>
</dbReference>
<dbReference type="InterPro" id="IPR023434">
    <property type="entry name" value="Arginosuc_synth_type_1_subfam"/>
</dbReference>
<dbReference type="InterPro" id="IPR024074">
    <property type="entry name" value="AS_cat/multimer_dom_body"/>
</dbReference>
<dbReference type="InterPro" id="IPR014729">
    <property type="entry name" value="Rossmann-like_a/b/a_fold"/>
</dbReference>
<dbReference type="NCBIfam" id="TIGR00032">
    <property type="entry name" value="argG"/>
    <property type="match status" value="1"/>
</dbReference>
<dbReference type="NCBIfam" id="NF001770">
    <property type="entry name" value="PRK00509.1"/>
    <property type="match status" value="1"/>
</dbReference>
<dbReference type="PANTHER" id="PTHR11587">
    <property type="entry name" value="ARGININOSUCCINATE SYNTHASE"/>
    <property type="match status" value="1"/>
</dbReference>
<dbReference type="PANTHER" id="PTHR11587:SF2">
    <property type="entry name" value="ARGININOSUCCINATE SYNTHASE"/>
    <property type="match status" value="1"/>
</dbReference>
<dbReference type="Pfam" id="PF20979">
    <property type="entry name" value="Arginosuc_syn_C"/>
    <property type="match status" value="1"/>
</dbReference>
<dbReference type="Pfam" id="PF00764">
    <property type="entry name" value="Arginosuc_synth"/>
    <property type="match status" value="1"/>
</dbReference>
<dbReference type="SUPFAM" id="SSF52402">
    <property type="entry name" value="Adenine nucleotide alpha hydrolases-like"/>
    <property type="match status" value="1"/>
</dbReference>
<dbReference type="SUPFAM" id="SSF69864">
    <property type="entry name" value="Argininosuccinate synthetase, C-terminal domain"/>
    <property type="match status" value="1"/>
</dbReference>
<dbReference type="PROSITE" id="PS00564">
    <property type="entry name" value="ARGININOSUCCIN_SYN_1"/>
    <property type="match status" value="1"/>
</dbReference>
<dbReference type="PROSITE" id="PS00565">
    <property type="entry name" value="ARGININOSUCCIN_SYN_2"/>
    <property type="match status" value="1"/>
</dbReference>
<sequence length="409" mass="45389">MARDVKKVVLAYSGGLDTSVILKWLQTTYKCEVITFTADLGQGEELEPARKKAQLLGIKDENIFIEDVREEFVAEYVFPMFRANAVYEGLYLLGTSIARPLIAKKQIEIARKMGADAVSHGATGKGNDQVRFELGYYALEPEITVIAPWREWDLTSRTRLLEFAEQHQIPIAKDKRGEAPFSVDANLLHSSSEGKVLEDPAEDAPEYVYQRTISPEAAPDEPTIITIAFDKGDAVAINGEALSPATLLTKLNELGKANGIGRLDLVENRFVGMKSRGVYETPGGTILLAAHRGIESITLDRGAAHLKDELMPRYAELIYNGFWFSPEREMLQAAIDHSQAYVTGEVTVKLYKGNTTVIGRKSPYSLYNQELVTFEEGAVAYDHRDAAGFIKLNALRLRTLGSRARKISE</sequence>